<feature type="chain" id="PRO_0000430294" description="Probable magnesium transporter NIPA6">
    <location>
        <begin position="1"/>
        <end position="328"/>
    </location>
</feature>
<feature type="topological domain" description="Extracellular" evidence="2">
    <location>
        <begin position="1"/>
        <end position="4"/>
    </location>
</feature>
<feature type="transmembrane region" description="Helical; Name=1" evidence="2">
    <location>
        <begin position="5"/>
        <end position="25"/>
    </location>
</feature>
<feature type="topological domain" description="Cytoplasmic" evidence="2">
    <location>
        <begin position="26"/>
        <end position="51"/>
    </location>
</feature>
<feature type="transmembrane region" description="Helical; Name=2" evidence="2">
    <location>
        <begin position="52"/>
        <end position="72"/>
    </location>
</feature>
<feature type="topological domain" description="Extracellular" evidence="2">
    <location>
        <begin position="73"/>
        <end position="76"/>
    </location>
</feature>
<feature type="transmembrane region" description="Helical; Name=3" evidence="2">
    <location>
        <begin position="77"/>
        <end position="97"/>
    </location>
</feature>
<feature type="topological domain" description="Cytoplasmic" evidence="2">
    <location>
        <begin position="98"/>
        <end position="104"/>
    </location>
</feature>
<feature type="transmembrane region" description="Helical; Name=4" evidence="2">
    <location>
        <begin position="105"/>
        <end position="125"/>
    </location>
</feature>
<feature type="topological domain" description="Extracellular" evidence="2">
    <location>
        <begin position="126"/>
        <end position="142"/>
    </location>
</feature>
<feature type="transmembrane region" description="Helical; Name=5" evidence="2">
    <location>
        <begin position="143"/>
        <end position="163"/>
    </location>
</feature>
<feature type="topological domain" description="Cytoplasmic" evidence="2">
    <location>
        <begin position="164"/>
        <end position="175"/>
    </location>
</feature>
<feature type="transmembrane region" description="Helical; Name=6" evidence="2">
    <location>
        <begin position="176"/>
        <end position="196"/>
    </location>
</feature>
<feature type="topological domain" description="Extracellular" evidence="2">
    <location>
        <begin position="197"/>
        <end position="209"/>
    </location>
</feature>
<feature type="transmembrane region" description="Helical; Name=7" evidence="2">
    <location>
        <begin position="210"/>
        <end position="230"/>
    </location>
</feature>
<feature type="topological domain" description="Cytoplasmic" evidence="2">
    <location>
        <begin position="231"/>
        <end position="240"/>
    </location>
</feature>
<feature type="transmembrane region" description="Helical; Name=8" evidence="2">
    <location>
        <begin position="241"/>
        <end position="261"/>
    </location>
</feature>
<feature type="topological domain" description="Extracellular" evidence="2">
    <location>
        <begin position="262"/>
        <end position="269"/>
    </location>
</feature>
<feature type="transmembrane region" description="Helical; Name=9" evidence="2">
    <location>
        <begin position="270"/>
        <end position="290"/>
    </location>
</feature>
<feature type="topological domain" description="Cytoplasmic" evidence="2">
    <location>
        <begin position="291"/>
        <end position="328"/>
    </location>
</feature>
<comment type="function">
    <text evidence="1">Acts as a Mg(2+) transporter. Can also transport other divalent cations such as Fe(2+), Sr(2+), Ba(2+), Mn(2+) and Co(2+) but to a much less extent than Mg(2+) (By similarity).</text>
</comment>
<comment type="subunit">
    <text evidence="1">Homodimer.</text>
</comment>
<comment type="subcellular location">
    <subcellularLocation>
        <location evidence="1">Cell membrane</location>
        <topology evidence="1">Multi-pass membrane protein</topology>
    </subcellularLocation>
    <subcellularLocation>
        <location evidence="1">Early endosome</location>
    </subcellularLocation>
    <text evidence="1">Recruited to the cell membrane in response to low extracellular magnesium.</text>
</comment>
<comment type="similarity">
    <text evidence="3">Belongs to the NIPA (TC 2.A.7) family.</text>
</comment>
<comment type="sequence caution" evidence="3">
    <conflict type="erroneous gene model prediction">
        <sequence resource="EMBL-CDS" id="AAD29804"/>
    </conflict>
</comment>
<name>NIPA6_ARATH</name>
<dbReference type="EMBL" id="AC006264">
    <property type="protein sequence ID" value="AAD29804.1"/>
    <property type="status" value="ALT_SEQ"/>
    <property type="molecule type" value="Genomic_DNA"/>
</dbReference>
<dbReference type="EMBL" id="CP002685">
    <property type="protein sequence ID" value="AEC07125.1"/>
    <property type="molecule type" value="Genomic_DNA"/>
</dbReference>
<dbReference type="EMBL" id="AK118581">
    <property type="protein sequence ID" value="BAC43181.1"/>
    <property type="molecule type" value="mRNA"/>
</dbReference>
<dbReference type="EMBL" id="BT026119">
    <property type="protein sequence ID" value="ABG48475.1"/>
    <property type="molecule type" value="mRNA"/>
</dbReference>
<dbReference type="PIR" id="D84597">
    <property type="entry name" value="D84597"/>
</dbReference>
<dbReference type="RefSeq" id="NP_179708.2">
    <property type="nucleotide sequence ID" value="NM_127682.4"/>
</dbReference>
<dbReference type="FunCoup" id="Q8GWX2">
    <property type="interactions" value="4089"/>
</dbReference>
<dbReference type="STRING" id="3702.Q8GWX2"/>
<dbReference type="iPTMnet" id="Q8GWX2"/>
<dbReference type="PaxDb" id="3702-AT2G21120.1"/>
<dbReference type="ProteomicsDB" id="250534"/>
<dbReference type="EnsemblPlants" id="AT2G21120.1">
    <property type="protein sequence ID" value="AT2G21120.1"/>
    <property type="gene ID" value="AT2G21120"/>
</dbReference>
<dbReference type="GeneID" id="816647"/>
<dbReference type="Gramene" id="AT2G21120.1">
    <property type="protein sequence ID" value="AT2G21120.1"/>
    <property type="gene ID" value="AT2G21120"/>
</dbReference>
<dbReference type="KEGG" id="ath:AT2G21120"/>
<dbReference type="Araport" id="AT2G21120"/>
<dbReference type="TAIR" id="AT2G21120">
    <property type="gene designation" value="AVI2"/>
</dbReference>
<dbReference type="eggNOG" id="KOG2922">
    <property type="taxonomic scope" value="Eukaryota"/>
</dbReference>
<dbReference type="HOGENOM" id="CLU_012349_1_1_1"/>
<dbReference type="InParanoid" id="Q8GWX2"/>
<dbReference type="OMA" id="IYVAITM"/>
<dbReference type="OrthoDB" id="6428174at2759"/>
<dbReference type="PhylomeDB" id="Q8GWX2"/>
<dbReference type="PRO" id="PR:Q8GWX2"/>
<dbReference type="Proteomes" id="UP000006548">
    <property type="component" value="Chromosome 2"/>
</dbReference>
<dbReference type="ExpressionAtlas" id="Q8GWX2">
    <property type="expression patterns" value="baseline and differential"/>
</dbReference>
<dbReference type="GO" id="GO:0005769">
    <property type="term" value="C:early endosome"/>
    <property type="evidence" value="ECO:0000250"/>
    <property type="project" value="UniProtKB"/>
</dbReference>
<dbReference type="GO" id="GO:0005783">
    <property type="term" value="C:endoplasmic reticulum"/>
    <property type="evidence" value="ECO:0000314"/>
    <property type="project" value="TAIR"/>
</dbReference>
<dbReference type="GO" id="GO:0005886">
    <property type="term" value="C:plasma membrane"/>
    <property type="evidence" value="ECO:0000250"/>
    <property type="project" value="UniProtKB"/>
</dbReference>
<dbReference type="GO" id="GO:0015095">
    <property type="term" value="F:magnesium ion transmembrane transporter activity"/>
    <property type="evidence" value="ECO:0007669"/>
    <property type="project" value="InterPro"/>
</dbReference>
<dbReference type="GO" id="GO:0051607">
    <property type="term" value="P:defense response to virus"/>
    <property type="evidence" value="ECO:0000316"/>
    <property type="project" value="TAIR"/>
</dbReference>
<dbReference type="GO" id="GO:0015693">
    <property type="term" value="P:magnesium ion transport"/>
    <property type="evidence" value="ECO:0000250"/>
    <property type="project" value="UniProtKB"/>
</dbReference>
<dbReference type="InterPro" id="IPR008521">
    <property type="entry name" value="Mg_trans_NIPA"/>
</dbReference>
<dbReference type="PANTHER" id="PTHR12570">
    <property type="match status" value="1"/>
</dbReference>
<dbReference type="PANTHER" id="PTHR12570:SF11">
    <property type="entry name" value="MAGNESIUM TRANSPORTER NIPA6-RELATED"/>
    <property type="match status" value="1"/>
</dbReference>
<dbReference type="Pfam" id="PF05653">
    <property type="entry name" value="Mg_trans_NIPA"/>
    <property type="match status" value="1"/>
</dbReference>
<dbReference type="SUPFAM" id="SSF103481">
    <property type="entry name" value="Multidrug resistance efflux transporter EmrE"/>
    <property type="match status" value="1"/>
</dbReference>
<accession>Q8GWX2</accession>
<accession>Q9SKQ1</accession>
<organism>
    <name type="scientific">Arabidopsis thaliana</name>
    <name type="common">Mouse-ear cress</name>
    <dbReference type="NCBI Taxonomy" id="3702"/>
    <lineage>
        <taxon>Eukaryota</taxon>
        <taxon>Viridiplantae</taxon>
        <taxon>Streptophyta</taxon>
        <taxon>Embryophyta</taxon>
        <taxon>Tracheophyta</taxon>
        <taxon>Spermatophyta</taxon>
        <taxon>Magnoliopsida</taxon>
        <taxon>eudicotyledons</taxon>
        <taxon>Gunneridae</taxon>
        <taxon>Pentapetalae</taxon>
        <taxon>rosids</taxon>
        <taxon>malvids</taxon>
        <taxon>Brassicales</taxon>
        <taxon>Brassicaceae</taxon>
        <taxon>Camelineae</taxon>
        <taxon>Arabidopsis</taxon>
    </lineage>
</organism>
<sequence>METDNGKGLILAVASSVFIGSSFILKKKGLKRAGAIGTRAGYGGYTYLLEPLWWAGMVTMIVGEAANFVAYIYAPAVLVTPLGALSIIISAVLAHFLLKEKLKKMGVLGCVSCIVGSVVIVIHAPKEQTPNSVEEIWNLATQPAFLIYVAITMSIVLALILHFEPLCGQTNILVYIGICSLMGALTVMSIKAIGIAIKLTMEGVSQIGYPQTWLFVMVAVTCVVTQLIYLNKALDTFNAAIVSPVYYVMFTTLTIVASAIMFKDWSGQDAASVASELCGFITVLTGTMILHGTREEEQQQASSEHVRWYDSRKSMNEEHLVSLYSPEY</sequence>
<gene>
    <name type="ordered locus">At2g21120</name>
    <name type="ORF">F26H11.12</name>
</gene>
<keyword id="KW-1003">Cell membrane</keyword>
<keyword id="KW-0967">Endosome</keyword>
<keyword id="KW-0406">Ion transport</keyword>
<keyword id="KW-0460">Magnesium</keyword>
<keyword id="KW-0472">Membrane</keyword>
<keyword id="KW-1185">Reference proteome</keyword>
<keyword id="KW-0812">Transmembrane</keyword>
<keyword id="KW-1133">Transmembrane helix</keyword>
<keyword id="KW-0813">Transport</keyword>
<proteinExistence type="evidence at transcript level"/>
<protein>
    <recommendedName>
        <fullName>Probable magnesium transporter NIPA6</fullName>
    </recommendedName>
</protein>
<reference key="1">
    <citation type="journal article" date="1999" name="Nature">
        <title>Sequence and analysis of chromosome 2 of the plant Arabidopsis thaliana.</title>
        <authorList>
            <person name="Lin X."/>
            <person name="Kaul S."/>
            <person name="Rounsley S.D."/>
            <person name="Shea T.P."/>
            <person name="Benito M.-I."/>
            <person name="Town C.D."/>
            <person name="Fujii C.Y."/>
            <person name="Mason T.M."/>
            <person name="Bowman C.L."/>
            <person name="Barnstead M.E."/>
            <person name="Feldblyum T.V."/>
            <person name="Buell C.R."/>
            <person name="Ketchum K.A."/>
            <person name="Lee J.J."/>
            <person name="Ronning C.M."/>
            <person name="Koo H.L."/>
            <person name="Moffat K.S."/>
            <person name="Cronin L.A."/>
            <person name="Shen M."/>
            <person name="Pai G."/>
            <person name="Van Aken S."/>
            <person name="Umayam L."/>
            <person name="Tallon L.J."/>
            <person name="Gill J.E."/>
            <person name="Adams M.D."/>
            <person name="Carrera A.J."/>
            <person name="Creasy T.H."/>
            <person name="Goodman H.M."/>
            <person name="Somerville C.R."/>
            <person name="Copenhaver G.P."/>
            <person name="Preuss D."/>
            <person name="Nierman W.C."/>
            <person name="White O."/>
            <person name="Eisen J.A."/>
            <person name="Salzberg S.L."/>
            <person name="Fraser C.M."/>
            <person name="Venter J.C."/>
        </authorList>
    </citation>
    <scope>NUCLEOTIDE SEQUENCE [LARGE SCALE GENOMIC DNA]</scope>
    <source>
        <strain>cv. Columbia</strain>
    </source>
</reference>
<reference key="2">
    <citation type="journal article" date="2017" name="Plant J.">
        <title>Araport11: a complete reannotation of the Arabidopsis thaliana reference genome.</title>
        <authorList>
            <person name="Cheng C.Y."/>
            <person name="Krishnakumar V."/>
            <person name="Chan A.P."/>
            <person name="Thibaud-Nissen F."/>
            <person name="Schobel S."/>
            <person name="Town C.D."/>
        </authorList>
    </citation>
    <scope>GENOME REANNOTATION</scope>
    <source>
        <strain>cv. Columbia</strain>
    </source>
</reference>
<reference key="3">
    <citation type="journal article" date="2002" name="Science">
        <title>Functional annotation of a full-length Arabidopsis cDNA collection.</title>
        <authorList>
            <person name="Seki M."/>
            <person name="Narusaka M."/>
            <person name="Kamiya A."/>
            <person name="Ishida J."/>
            <person name="Satou M."/>
            <person name="Sakurai T."/>
            <person name="Nakajima M."/>
            <person name="Enju A."/>
            <person name="Akiyama K."/>
            <person name="Oono Y."/>
            <person name="Muramatsu M."/>
            <person name="Hayashizaki Y."/>
            <person name="Kawai J."/>
            <person name="Carninci P."/>
            <person name="Itoh M."/>
            <person name="Ishii Y."/>
            <person name="Arakawa T."/>
            <person name="Shibata K."/>
            <person name="Shinagawa A."/>
            <person name="Shinozaki K."/>
        </authorList>
    </citation>
    <scope>NUCLEOTIDE SEQUENCE [LARGE SCALE MRNA]</scope>
    <source>
        <strain>cv. Columbia</strain>
    </source>
</reference>
<reference key="4">
    <citation type="submission" date="2006-07" db="EMBL/GenBank/DDBJ databases">
        <title>Arabidopsis ORF clones.</title>
        <authorList>
            <person name="Kim C.J."/>
            <person name="Chen H."/>
            <person name="Quinitio C."/>
            <person name="Shinn P."/>
            <person name="Ecker J.R."/>
        </authorList>
    </citation>
    <scope>NUCLEOTIDE SEQUENCE [LARGE SCALE MRNA]</scope>
    <source>
        <strain>cv. Columbia</strain>
    </source>
</reference>
<evidence type="ECO:0000250" key="1"/>
<evidence type="ECO:0000255" key="2"/>
<evidence type="ECO:0000305" key="3"/>